<keyword id="KW-0963">Cytoplasm</keyword>
<keyword id="KW-0396">Initiation factor</keyword>
<keyword id="KW-0597">Phosphoprotein</keyword>
<keyword id="KW-0648">Protein biosynthesis</keyword>
<proteinExistence type="inferred from homology"/>
<sequence>MSRFFANGSDSESESSEDEIQATNFNKASAFQFSDDEEEVKRVVRSTKEKRYENLTSIIKTIRNHKKIKDIPNTLSSFEDLTRAYQKALPVISKEENGITPRFYIRCLAELEDFINEVWEDREGRKNLSKNNSKSLGTLRQKVRKYIKDFEDDLSRFREAPDQESEAEDEVVALESDGGDAGDDSDSGVKPTEAAPKAVKTAPAKAAPADDDDSDDSIDWDSDSESETESSDDENQYQNMRERFLKRTTEKEEKDDDKRKDKRKEQKIKIRKRAEDDEDGEWETVVKGHVVEKPKMFEKDAEIDVPLVLAKLLEIMSARGKKRTDRRLQIDLLFELRDISDQHNLGTAVSVKIHFNIISAIYDYNQKISEPMKLEHWALLLEVMQSMMKLLLANADIIMSESVAEEHEEYVTAPFYVRGCPLAAVERLDDEFVKLLKECDPHSNDYVSRLKDEVNVVKTIELVLQYFERSGTNNERCRIYLRKIEHLYYKFDPEVLKKKRGEVPATTSTSVDVMDKLCKFIYAKDDTDRIRTRAILAHIYHHAMHDNWFQARDLVLMSHLQDNIDAADPATRILYNRMMANLGLCAFRQENVKDAHHCLVDLMVTGKPKELLAQGLLPQRQHERSAEQEKIEKQRQMPFHMHINLELLECVYLVSAMLLEIPYIAAHEFDARRRMISKTFYQQLRSSERQSLVGPPESMREHVVAAAKAMRCGNWQACANFIVNKKMNTKVWDLFYESDRVREMLTKFIKEESLRTYLFTYSNVYTSISIPSLAQMYELPVPKVHSIISKMIINEELMASLDDPSETVVMHRSEPSRLQALAMQFVDKVTNLVDVNEKVFDMKQGNFFQRGNMGNRGDRGYNRNQNNQGGNWLGQRRDRNNRNRNQRGHHKNNQDRQQQQQQQVQTIDEE</sequence>
<evidence type="ECO:0000255" key="1">
    <source>
        <dbReference type="HAMAP-Rule" id="MF_03002"/>
    </source>
</evidence>
<evidence type="ECO:0000255" key="2">
    <source>
        <dbReference type="PROSITE-ProRule" id="PRU01185"/>
    </source>
</evidence>
<evidence type="ECO:0000256" key="3">
    <source>
        <dbReference type="SAM" id="MobiDB-lite"/>
    </source>
</evidence>
<gene>
    <name evidence="1" type="primary">eIF3c</name>
    <name evidence="1" type="synonym">eIF3-S8</name>
    <name type="ORF">GG21805</name>
</gene>
<organism>
    <name type="scientific">Drosophila erecta</name>
    <name type="common">Fruit fly</name>
    <dbReference type="NCBI Taxonomy" id="7220"/>
    <lineage>
        <taxon>Eukaryota</taxon>
        <taxon>Metazoa</taxon>
        <taxon>Ecdysozoa</taxon>
        <taxon>Arthropoda</taxon>
        <taxon>Hexapoda</taxon>
        <taxon>Insecta</taxon>
        <taxon>Pterygota</taxon>
        <taxon>Neoptera</taxon>
        <taxon>Endopterygota</taxon>
        <taxon>Diptera</taxon>
        <taxon>Brachycera</taxon>
        <taxon>Muscomorpha</taxon>
        <taxon>Ephydroidea</taxon>
        <taxon>Drosophilidae</taxon>
        <taxon>Drosophila</taxon>
        <taxon>Sophophora</taxon>
    </lineage>
</organism>
<feature type="chain" id="PRO_0000365386" description="Eukaryotic translation initiation factor 3 subunit C">
    <location>
        <begin position="1"/>
        <end position="910"/>
    </location>
</feature>
<feature type="domain" description="PCI" evidence="2">
    <location>
        <begin position="639"/>
        <end position="815"/>
    </location>
</feature>
<feature type="region of interest" description="Disordered" evidence="3">
    <location>
        <begin position="1"/>
        <end position="21"/>
    </location>
</feature>
<feature type="region of interest" description="Disordered" evidence="3">
    <location>
        <begin position="157"/>
        <end position="279"/>
    </location>
</feature>
<feature type="region of interest" description="Disordered" evidence="3">
    <location>
        <begin position="847"/>
        <end position="910"/>
    </location>
</feature>
<feature type="compositionally biased region" description="Acidic residues" evidence="3">
    <location>
        <begin position="11"/>
        <end position="20"/>
    </location>
</feature>
<feature type="compositionally biased region" description="Acidic residues" evidence="3">
    <location>
        <begin position="162"/>
        <end position="186"/>
    </location>
</feature>
<feature type="compositionally biased region" description="Low complexity" evidence="3">
    <location>
        <begin position="188"/>
        <end position="207"/>
    </location>
</feature>
<feature type="compositionally biased region" description="Acidic residues" evidence="3">
    <location>
        <begin position="209"/>
        <end position="235"/>
    </location>
</feature>
<feature type="compositionally biased region" description="Basic and acidic residues" evidence="3">
    <location>
        <begin position="240"/>
        <end position="268"/>
    </location>
</feature>
<feature type="compositionally biased region" description="Low complexity" evidence="3">
    <location>
        <begin position="862"/>
        <end position="874"/>
    </location>
</feature>
<feature type="compositionally biased region" description="Basic residues" evidence="3">
    <location>
        <begin position="882"/>
        <end position="891"/>
    </location>
</feature>
<feature type="compositionally biased region" description="Low complexity" evidence="3">
    <location>
        <begin position="895"/>
        <end position="910"/>
    </location>
</feature>
<feature type="modified residue" description="Phosphoserine" evidence="1">
    <location>
        <position position="34"/>
    </location>
</feature>
<feature type="modified residue" description="Phosphoserine" evidence="1">
    <location>
        <position position="165"/>
    </location>
</feature>
<feature type="modified residue" description="Phosphoserine" evidence="1">
    <location>
        <position position="176"/>
    </location>
</feature>
<feature type="modified residue" description="Phosphoserine" evidence="1">
    <location>
        <position position="185"/>
    </location>
</feature>
<comment type="function">
    <text evidence="1">Component of the eukaryotic translation initiation factor 3 (eIF-3) complex, which is involved in protein synthesis of a specialized repertoire of mRNAs and, together with other initiation factors, stimulates binding of mRNA and methionyl-tRNAi to the 40S ribosome. The eIF-3 complex specifically targets and initiates translation of a subset of mRNAs involved in cell proliferation.</text>
</comment>
<comment type="subunit">
    <text evidence="1">Component of the eukaryotic translation initiation factor 3 (eIF-3) complex. The eIF-3 complex interacts with pix.</text>
</comment>
<comment type="subcellular location">
    <subcellularLocation>
        <location evidence="1">Cytoplasm</location>
    </subcellularLocation>
</comment>
<comment type="similarity">
    <text evidence="1">Belongs to the eIF-3 subunit C family.</text>
</comment>
<name>EIF3C_DROER</name>
<reference key="1">
    <citation type="journal article" date="2007" name="Nature">
        <title>Evolution of genes and genomes on the Drosophila phylogeny.</title>
        <authorList>
            <consortium name="Drosophila 12 genomes consortium"/>
        </authorList>
    </citation>
    <scope>NUCLEOTIDE SEQUENCE [LARGE SCALE GENOMIC DNA]</scope>
    <source>
        <strain>Tucson 14021-0224.01</strain>
    </source>
</reference>
<accession>B3NML0</accession>
<dbReference type="EMBL" id="CH954179">
    <property type="protein sequence ID" value="EDV54949.1"/>
    <property type="molecule type" value="Genomic_DNA"/>
</dbReference>
<dbReference type="SMR" id="B3NML0"/>
<dbReference type="EnsemblMetazoa" id="FBtr0141859">
    <property type="protein sequence ID" value="FBpp0140351"/>
    <property type="gene ID" value="FBgn0113983"/>
</dbReference>
<dbReference type="EnsemblMetazoa" id="XM_001974513.3">
    <property type="protein sequence ID" value="XP_001974549.1"/>
    <property type="gene ID" value="LOC6546759"/>
</dbReference>
<dbReference type="GeneID" id="6546759"/>
<dbReference type="KEGG" id="der:6546759"/>
<dbReference type="CTD" id="8663"/>
<dbReference type="eggNOG" id="KOG1076">
    <property type="taxonomic scope" value="Eukaryota"/>
</dbReference>
<dbReference type="HOGENOM" id="CLU_004304_0_0_1"/>
<dbReference type="OMA" id="FRCGLIK"/>
<dbReference type="OrthoDB" id="29647at2759"/>
<dbReference type="PhylomeDB" id="B3NML0"/>
<dbReference type="ChiTaRS" id="eIF3-S8">
    <property type="organism name" value="fly"/>
</dbReference>
<dbReference type="Proteomes" id="UP000008711">
    <property type="component" value="Unassembled WGS sequence"/>
</dbReference>
<dbReference type="GO" id="GO:0016282">
    <property type="term" value="C:eukaryotic 43S preinitiation complex"/>
    <property type="evidence" value="ECO:0007669"/>
    <property type="project" value="UniProtKB-UniRule"/>
</dbReference>
<dbReference type="GO" id="GO:0033290">
    <property type="term" value="C:eukaryotic 48S preinitiation complex"/>
    <property type="evidence" value="ECO:0007669"/>
    <property type="project" value="UniProtKB-UniRule"/>
</dbReference>
<dbReference type="GO" id="GO:0005852">
    <property type="term" value="C:eukaryotic translation initiation factor 3 complex"/>
    <property type="evidence" value="ECO:0007669"/>
    <property type="project" value="UniProtKB-UniRule"/>
</dbReference>
<dbReference type="GO" id="GO:0003723">
    <property type="term" value="F:RNA binding"/>
    <property type="evidence" value="ECO:0007669"/>
    <property type="project" value="InterPro"/>
</dbReference>
<dbReference type="GO" id="GO:0003743">
    <property type="term" value="F:translation initiation factor activity"/>
    <property type="evidence" value="ECO:0007669"/>
    <property type="project" value="UniProtKB-UniRule"/>
</dbReference>
<dbReference type="GO" id="GO:0031369">
    <property type="term" value="F:translation initiation factor binding"/>
    <property type="evidence" value="ECO:0007669"/>
    <property type="project" value="InterPro"/>
</dbReference>
<dbReference type="GO" id="GO:0001732">
    <property type="term" value="P:formation of cytoplasmic translation initiation complex"/>
    <property type="evidence" value="ECO:0007669"/>
    <property type="project" value="UniProtKB-UniRule"/>
</dbReference>
<dbReference type="FunFam" id="1.10.10.10:FF:000300">
    <property type="entry name" value="Eukaryotic translation initiation factor 3 subunit C"/>
    <property type="match status" value="1"/>
</dbReference>
<dbReference type="Gene3D" id="1.25.40.570">
    <property type="match status" value="1"/>
</dbReference>
<dbReference type="HAMAP" id="MF_03002">
    <property type="entry name" value="eIF3c"/>
    <property type="match status" value="1"/>
</dbReference>
<dbReference type="InterPro" id="IPR027516">
    <property type="entry name" value="EIF3C"/>
</dbReference>
<dbReference type="InterPro" id="IPR008905">
    <property type="entry name" value="EIF3C_N_dom"/>
</dbReference>
<dbReference type="InterPro" id="IPR000717">
    <property type="entry name" value="PCI_dom"/>
</dbReference>
<dbReference type="InterPro" id="IPR036390">
    <property type="entry name" value="WH_DNA-bd_sf"/>
</dbReference>
<dbReference type="PANTHER" id="PTHR13937">
    <property type="entry name" value="EUKARYOTIC TRANSLATION INITATION FACTOR 3, SUBUNIT 8 EIF3S8 -RELATED"/>
    <property type="match status" value="1"/>
</dbReference>
<dbReference type="PANTHER" id="PTHR13937:SF0">
    <property type="entry name" value="EUKARYOTIC TRANSLATION INITIATION FACTOR 3 SUBUNIT C-RELATED"/>
    <property type="match status" value="1"/>
</dbReference>
<dbReference type="Pfam" id="PF05470">
    <property type="entry name" value="eIF-3c_N"/>
    <property type="match status" value="1"/>
</dbReference>
<dbReference type="Pfam" id="PF01399">
    <property type="entry name" value="PCI"/>
    <property type="match status" value="1"/>
</dbReference>
<dbReference type="SMART" id="SM00088">
    <property type="entry name" value="PINT"/>
    <property type="match status" value="1"/>
</dbReference>
<dbReference type="SUPFAM" id="SSF46785">
    <property type="entry name" value="Winged helix' DNA-binding domain"/>
    <property type="match status" value="1"/>
</dbReference>
<dbReference type="PROSITE" id="PS50250">
    <property type="entry name" value="PCI"/>
    <property type="match status" value="1"/>
</dbReference>
<protein>
    <recommendedName>
        <fullName evidence="1">Eukaryotic translation initiation factor 3 subunit C</fullName>
        <shortName evidence="1">eIF3c</shortName>
    </recommendedName>
    <alternativeName>
        <fullName evidence="1">Eukaryotic translation initiation factor 3 subunit 8</fullName>
    </alternativeName>
</protein>